<sequence>MGRKKIQITRIMDERNRQVTFTKRKFGLMKKAYELSVLCDCEIALIIFNSTNKLFQYASTDMDKVLLKYTEYNEPHESRTNSDIVETLRKKGLNGCDSPDPDADDSVGHSPESEDKYRKINEDIDLMISRQRLCAVPPPSFEMPVTIPVSSHNSLVYSNPVSTLGNPNLLPLAHPSLQRNSMSPGVTHRPPSAGNTGGLMGGDLTSGAGTSAGNGYGNPRNSPGLLVSPGNLNKNIQAKSPPPMNLGMNNRKPDLRVLIPPGSKNTMPSVSEDVDLLLNQRINNSQSAQSLATPVVSVATPTLPGQGMGGYPSAISTTYGTEYSLSSADLSSLSGFNTASALHLGSVTGWQQQHLHNMPPSALSQLGACTSTHLSQSSNLSLPSTQSLSIKSEPVSPPRDRTTTPSRYPQHTTRHEAGRSPVDSLSSCSSSYDGSDREDHRNEFHSPIGLTRPSPDERESPSVKRMRLSEGWAT</sequence>
<comment type="function">
    <text evidence="3 8 13 14 15 16 17 22 26 27">Transcription activator which binds specifically to the MEF2 element present in the regulatory regions of many muscle-specific genes. Controls cardiac morphogenesis and myogenesis, and is also involved in vascular development (PubMed:33941892). Enhances transcriptional activation mediated by SOX18 (PubMed:11554755). May also be involved in neurogenesis and in the development of cortical architecture. Isoforms that lack the repressor domain are more active than isoform 1 (By similarity). Plays an essential role in hippocampal-dependent learning and memory by suppressing the number of excitatory synapses and thus regulating basal and evoked synaptic transmission. Crucial for normal neuronal development, distribution, and electrical activity in the neocortex. Necessary for proper development of megakaryocytes and platelets and for bone marrow B-lymphopoiesis. Required for B-cell survival and proliferation in response to BCR stimulation, efficient IgG1 antibody responses to T-cell-dependent antigens and for normal induction of germinal center B-cells.</text>
</comment>
<comment type="subunit">
    <text evidence="2 3 7 8 9 12 18 19 20 21 22">Forms a complex with class II HDACs in undifferentiating cells. On myogenic differentiation, HDACs are released into the cytoplasm allowing MEF2s to interact with other proteins for activation. Interacts with EP300 in differentiating cells; the interaction acetylates MEF2C leading to increased DNA binding and activation (By similarity). Interacts with HDAC7 and CARM1 (PubMed:11279209, PubMed:11713257). Interacts with HDAC4, HDAC7 AND HDAC9; the interaction with HDACs represses transcriptional activity (By similarity). Interacts with LPIN1 (PubMed:19753306). Interacts with MYOCD (PubMed:16818234). Interacts with AKAP13 (PubMed:20139090). Interacts with FOXK1; the interaction inhibits MEF2C transactivation activity (PubMed:22956541). Interacts (via N-terminus) with HABP4; this interaction decreases DNA-binding activity of MEF2C in myocardial cells in response to mechanical stress (By similarity). Interacts with JPH2; interaction specifically takes place with the Junctophilin-2 N-terminal fragment cleavage product of JPH2 (PubMed:30409805). Interacts (via MADS box) with SOX18 (PubMed:11554755). Interacts with PHF7; the interaction promotes MEF2C binding to its transcription targets (PubMed:33941892).</text>
</comment>
<comment type="interaction">
    <interactant intactId="EBI-643797">
        <id>Q8CFN5</id>
    </interactant>
    <interactant intactId="EBI-366905">
        <id>Q9QZR5</id>
        <label>Hipk2</label>
    </interactant>
    <organismsDiffer>false</organismsDiffer>
    <experiments>5</experiments>
</comment>
<comment type="interaction">
    <interactant intactId="EBI-643797">
        <id>Q8CFN5</id>
    </interactant>
    <interactant intactId="EBI-1048378">
        <id>Q8WUI4</id>
        <label>HDAC7</label>
    </interactant>
    <organismsDiffer>true</organismsDiffer>
    <experiments>2</experiments>
</comment>
<comment type="interaction">
    <interactant intactId="EBI-643822">
        <id>Q8CFN5-4</id>
    </interactant>
    <interactant intactId="EBI-644049">
        <id>Q91V92</id>
        <label>Acly</label>
    </interactant>
    <organismsDiffer>false</organismsDiffer>
    <experiments>3</experiments>
</comment>
<comment type="subcellular location">
    <subcellularLocation>
        <location evidence="8">Nucleus</location>
    </subcellularLocation>
    <subcellularLocation>
        <location evidence="2">Cytoplasm</location>
        <location evidence="2">Sarcoplasm</location>
    </subcellularLocation>
</comment>
<comment type="alternative products">
    <event type="alternative splicing"/>
    <isoform>
        <id>Q8CFN5-1</id>
        <name>1</name>
        <sequence type="displayed"/>
    </isoform>
    <isoform>
        <id>Q8CFN5-2</id>
        <name>2</name>
        <sequence type="described" ref="VSP_012504"/>
    </isoform>
    <isoform>
        <id>Q8CFN5-3</id>
        <name>3</name>
        <sequence type="described" ref="VSP_012505"/>
    </isoform>
    <isoform>
        <id>Q8CFN5-4</id>
        <name>4</name>
        <sequence type="described" ref="VSP_012501 VSP_012502 VSP_012503 VSP_012504 VSP_012505"/>
    </isoform>
    <isoform>
        <id>Q8CFN5-5</id>
        <name>5</name>
        <sequence type="described" ref="VSP_012501 VSP_012502 VSP_012503"/>
    </isoform>
    <text>Additional isoforms seem to exist.</text>
</comment>
<comment type="tissue specificity">
    <text evidence="10 11 14 16 23 25">Widely expressed though mainly restricted to skeletal and cardiac muscle, brain, neurons and lymphocytes. Beta domain-lacking isoforms are the most predominantly expressed in all tissues including skeletal and cardiac muscle and brain. Only brain expresses all isoforms. Expression occurs primarily in the internal granule cell layer of the olfactory bulb, cortex, thalamus, hippocampus and cerebellum. Low levels in the cerebellum and hindbrain. Expressed throughout the cortex, including the frontal and entorhinal cortex, dentate gyrus, and basolateral amygdala. Selectively expressed in B-cells but not in T-cells, and its expression increases as B-cells mature.</text>
</comment>
<comment type="developmental stage">
    <text evidence="27">Expressed in developing endothelial cells and smooth muscle cells, as well as in surrounding mesenchyme, during embryogenesis. Up-regulated during myogenesis.</text>
</comment>
<comment type="domain">
    <text evidence="1">The beta domain, missing in a number of isoforms, is required for enhancement of transcriptional activity.</text>
</comment>
<comment type="PTM">
    <text evidence="1 24">Phosphorylation on Ser-59 enhances DNA binding activity (By similarity). Phosphorylation on Ser-396 is required for Lys-391 sumoylation and inhibits transcriptional activity.</text>
</comment>
<comment type="PTM">
    <text evidence="1 13">Acetylated by p300 on several sites in diffentiating myocytes (By similarity). Acetylation on Lys-4 increases DNA binding and transactivation.</text>
</comment>
<comment type="PTM">
    <text evidence="1">Sumoylated on Lys-391 with SUMO2 but not by SUMO1 represses transcriptional activity.</text>
</comment>
<comment type="PTM">
    <text evidence="1">Proteolytically cleaved in cerebellar granule neurons, probably by caspase 7, following neurotoxicity. Preferentially cleaves the CDK5-mediated hyperphosphorylated form which leads to neuron apoptosis and transcriptional inactivation (By similarity).</text>
</comment>
<comment type="disruption phenotype">
    <text evidence="15 16 17">Mice show impairment in hippocampal-dependent learning and also increase in the number of excitatory synapses and potentiation of basal and evoked synaptic transmission. Mice surviving to adulthood manifest smaller, apparently less mature neurons and smaller whole brain size, with resultant aberrant electrophysiology and behavior. Mice exhibit thrombocytopenia and a defect in B-lymphopoiesis.</text>
</comment>
<comment type="similarity">
    <text evidence="31">Belongs to the MEF2 family.</text>
</comment>
<evidence type="ECO:0000250" key="1"/>
<evidence type="ECO:0000250" key="2">
    <source>
        <dbReference type="UniProtKB" id="A0A096MJY4"/>
    </source>
</evidence>
<evidence type="ECO:0000250" key="3">
    <source>
        <dbReference type="UniProtKB" id="Q06413"/>
    </source>
</evidence>
<evidence type="ECO:0000255" key="4"/>
<evidence type="ECO:0000255" key="5">
    <source>
        <dbReference type="PROSITE-ProRule" id="PRU00251"/>
    </source>
</evidence>
<evidence type="ECO:0000256" key="6">
    <source>
        <dbReference type="SAM" id="MobiDB-lite"/>
    </source>
</evidence>
<evidence type="ECO:0000269" key="7">
    <source>
    </source>
</evidence>
<evidence type="ECO:0000269" key="8">
    <source>
    </source>
</evidence>
<evidence type="ECO:0000269" key="9">
    <source>
    </source>
</evidence>
<evidence type="ECO:0000269" key="10">
    <source>
    </source>
</evidence>
<evidence type="ECO:0000269" key="11">
    <source>
    </source>
</evidence>
<evidence type="ECO:0000269" key="12">
    <source>
    </source>
</evidence>
<evidence type="ECO:0000269" key="13">
    <source>
    </source>
</evidence>
<evidence type="ECO:0000269" key="14">
    <source>
    </source>
</evidence>
<evidence type="ECO:0000269" key="15">
    <source>
    </source>
</evidence>
<evidence type="ECO:0000269" key="16">
    <source>
    </source>
</evidence>
<evidence type="ECO:0000269" key="17">
    <source>
    </source>
</evidence>
<evidence type="ECO:0000269" key="18">
    <source>
    </source>
</evidence>
<evidence type="ECO:0000269" key="19">
    <source>
    </source>
</evidence>
<evidence type="ECO:0000269" key="20">
    <source>
    </source>
</evidence>
<evidence type="ECO:0000269" key="21">
    <source>
    </source>
</evidence>
<evidence type="ECO:0000269" key="22">
    <source>
    </source>
</evidence>
<evidence type="ECO:0000269" key="23">
    <source>
    </source>
</evidence>
<evidence type="ECO:0000269" key="24">
    <source>
    </source>
</evidence>
<evidence type="ECO:0000269" key="25">
    <source>
    </source>
</evidence>
<evidence type="ECO:0000269" key="26">
    <source>
    </source>
</evidence>
<evidence type="ECO:0000269" key="27">
    <source>
    </source>
</evidence>
<evidence type="ECO:0000303" key="28">
    <source>
    </source>
</evidence>
<evidence type="ECO:0000303" key="29">
    <source>
    </source>
</evidence>
<evidence type="ECO:0000303" key="30">
    <source>
    </source>
</evidence>
<evidence type="ECO:0000305" key="31"/>
<evidence type="ECO:0000312" key="32">
    <source>
        <dbReference type="MGI" id="MGI:99458"/>
    </source>
</evidence>
<evidence type="ECO:0007744" key="33">
    <source>
    </source>
</evidence>
<evidence type="ECO:0007829" key="34">
    <source>
        <dbReference type="PDB" id="5F28"/>
    </source>
</evidence>
<name>MEF2C_MOUSE</name>
<gene>
    <name evidence="32" type="primary">Mef2c</name>
</gene>
<dbReference type="EMBL" id="AK009139">
    <property type="protein sequence ID" value="BAB26099.1"/>
    <property type="molecule type" value="mRNA"/>
</dbReference>
<dbReference type="EMBL" id="BC026841">
    <property type="protein sequence ID" value="AAH26841.1"/>
    <property type="molecule type" value="mRNA"/>
</dbReference>
<dbReference type="EMBL" id="BC037731">
    <property type="protein sequence ID" value="AAH37731.1"/>
    <property type="molecule type" value="mRNA"/>
</dbReference>
<dbReference type="EMBL" id="BC057650">
    <property type="protein sequence ID" value="AAH57650.1"/>
    <property type="molecule type" value="mRNA"/>
</dbReference>
<dbReference type="CCDS" id="CCDS26664.1">
    <molecule id="Q8CFN5-4"/>
</dbReference>
<dbReference type="CCDS" id="CCDS49320.1">
    <molecule id="Q8CFN5-2"/>
</dbReference>
<dbReference type="CCDS" id="CCDS84042.1">
    <molecule id="Q8CFN5-1"/>
</dbReference>
<dbReference type="CCDS" id="CCDS84043.1">
    <molecule id="Q8CFN5-3"/>
</dbReference>
<dbReference type="CCDS" id="CCDS84045.1">
    <molecule id="Q8CFN5-5"/>
</dbReference>
<dbReference type="RefSeq" id="NP_001164008.1">
    <molecule id="Q8CFN5-2"/>
    <property type="nucleotide sequence ID" value="NM_001170537.2"/>
</dbReference>
<dbReference type="RefSeq" id="NP_001334493.1">
    <molecule id="Q8CFN5-1"/>
    <property type="nucleotide sequence ID" value="NM_001347564.2"/>
</dbReference>
<dbReference type="RefSeq" id="NP_001334495.1">
    <molecule id="Q8CFN5-1"/>
    <property type="nucleotide sequence ID" value="NM_001347566.2"/>
</dbReference>
<dbReference type="RefSeq" id="NP_001334496.1">
    <molecule id="Q8CFN5-1"/>
    <property type="nucleotide sequence ID" value="NM_001347567.2"/>
</dbReference>
<dbReference type="RefSeq" id="NP_001334497.1">
    <molecule id="Q8CFN5-5"/>
    <property type="nucleotide sequence ID" value="NM_001347568.2"/>
</dbReference>
<dbReference type="RefSeq" id="NP_001334498.1">
    <molecule id="Q8CFN5-5"/>
    <property type="nucleotide sequence ID" value="NM_001347569.2"/>
</dbReference>
<dbReference type="RefSeq" id="NP_001334500.1">
    <molecule id="Q8CFN5-3"/>
    <property type="nucleotide sequence ID" value="NM_001347571.2"/>
</dbReference>
<dbReference type="RefSeq" id="NP_001334501.1">
    <molecule id="Q8CFN5-3"/>
    <property type="nucleotide sequence ID" value="NM_001347572.2"/>
</dbReference>
<dbReference type="RefSeq" id="NP_001334502.1">
    <molecule id="Q8CFN5-3"/>
    <property type="nucleotide sequence ID" value="NM_001347573.2"/>
</dbReference>
<dbReference type="RefSeq" id="NP_001334503.1">
    <molecule id="Q8CFN5-3"/>
    <property type="nucleotide sequence ID" value="NM_001347574.2"/>
</dbReference>
<dbReference type="RefSeq" id="NP_001334504.1">
    <molecule id="Q8CFN5-3"/>
    <property type="nucleotide sequence ID" value="NM_001347575.2"/>
</dbReference>
<dbReference type="RefSeq" id="NP_001334505.1">
    <molecule id="Q8CFN5-3"/>
    <property type="nucleotide sequence ID" value="NM_001347576.2"/>
</dbReference>
<dbReference type="RefSeq" id="NP_001334506.1">
    <molecule id="Q8CFN5-3"/>
    <property type="nucleotide sequence ID" value="NM_001347577.2"/>
</dbReference>
<dbReference type="RefSeq" id="NP_079558.1">
    <molecule id="Q8CFN5-4"/>
    <property type="nucleotide sequence ID" value="NM_025282.4"/>
</dbReference>
<dbReference type="RefSeq" id="XP_006517186.1">
    <molecule id="Q8CFN5-1"/>
    <property type="nucleotide sequence ID" value="XM_006517123.4"/>
</dbReference>
<dbReference type="RefSeq" id="XP_006517187.1">
    <molecule id="Q8CFN5-1"/>
    <property type="nucleotide sequence ID" value="XM_006517124.5"/>
</dbReference>
<dbReference type="RefSeq" id="XP_006517189.1">
    <molecule id="Q8CFN5-5"/>
    <property type="nucleotide sequence ID" value="XM_006517126.4"/>
</dbReference>
<dbReference type="RefSeq" id="XP_006517190.1">
    <molecule id="Q8CFN5-2"/>
    <property type="nucleotide sequence ID" value="XM_006517127.5"/>
</dbReference>
<dbReference type="RefSeq" id="XP_006517195.1">
    <molecule id="Q8CFN5-4"/>
    <property type="nucleotide sequence ID" value="XM_006517132.5"/>
</dbReference>
<dbReference type="RefSeq" id="XP_011242794.1">
    <molecule id="Q8CFN5-1"/>
    <property type="nucleotide sequence ID" value="XM_011244492.4"/>
</dbReference>
<dbReference type="RefSeq" id="XP_017170894.1">
    <molecule id="Q8CFN5-1"/>
    <property type="nucleotide sequence ID" value="XM_017315405.3"/>
</dbReference>
<dbReference type="RefSeq" id="XP_030103032.1">
    <molecule id="Q8CFN5-1"/>
    <property type="nucleotide sequence ID" value="XM_030247172.2"/>
</dbReference>
<dbReference type="RefSeq" id="XP_030103035.1">
    <molecule id="Q8CFN5-2"/>
    <property type="nucleotide sequence ID" value="XM_030247175.2"/>
</dbReference>
<dbReference type="RefSeq" id="XP_030103036.1">
    <molecule id="Q8CFN5-2"/>
    <property type="nucleotide sequence ID" value="XM_030247176.2"/>
</dbReference>
<dbReference type="RefSeq" id="XP_030103037.1">
    <molecule id="Q8CFN5-3"/>
    <property type="nucleotide sequence ID" value="XM_030247177.2"/>
</dbReference>
<dbReference type="RefSeq" id="XP_036013779.1">
    <molecule id="Q8CFN5-1"/>
    <property type="nucleotide sequence ID" value="XM_036157886.1"/>
</dbReference>
<dbReference type="RefSeq" id="XP_036013780.1">
    <molecule id="Q8CFN5-5"/>
    <property type="nucleotide sequence ID" value="XM_036157887.1"/>
</dbReference>
<dbReference type="RefSeq" id="XP_036013783.1">
    <molecule id="Q8CFN5-3"/>
    <property type="nucleotide sequence ID" value="XM_036157890.1"/>
</dbReference>
<dbReference type="PDB" id="5F28">
    <property type="method" value="X-ray"/>
    <property type="resolution" value="2.90 A"/>
    <property type="chains" value="A/B/C/D=1-95"/>
</dbReference>
<dbReference type="PDBsum" id="5F28"/>
<dbReference type="SMR" id="Q8CFN5"/>
<dbReference type="BioGRID" id="201383">
    <property type="interactions" value="14"/>
</dbReference>
<dbReference type="DIP" id="DIP-49524N"/>
<dbReference type="ELM" id="Q8CFN5"/>
<dbReference type="FunCoup" id="Q8CFN5">
    <property type="interactions" value="3141"/>
</dbReference>
<dbReference type="IntAct" id="Q8CFN5">
    <property type="interactions" value="10"/>
</dbReference>
<dbReference type="MINT" id="Q8CFN5"/>
<dbReference type="STRING" id="10090.ENSMUSP00000143401"/>
<dbReference type="GlyGen" id="Q8CFN5">
    <property type="glycosylation" value="5 sites, 1 O-linked glycan (5 sites)"/>
</dbReference>
<dbReference type="iPTMnet" id="Q8CFN5"/>
<dbReference type="PhosphoSitePlus" id="Q8CFN5"/>
<dbReference type="PaxDb" id="10090-ENSMUSP00000132547"/>
<dbReference type="PeptideAtlas" id="Q8CFN5"/>
<dbReference type="ProteomicsDB" id="292210">
    <molecule id="Q8CFN5-1"/>
</dbReference>
<dbReference type="ProteomicsDB" id="292211">
    <molecule id="Q8CFN5-2"/>
</dbReference>
<dbReference type="ProteomicsDB" id="292212">
    <molecule id="Q8CFN5-3"/>
</dbReference>
<dbReference type="ProteomicsDB" id="292213">
    <molecule id="Q8CFN5-4"/>
</dbReference>
<dbReference type="ProteomicsDB" id="292214">
    <molecule id="Q8CFN5-5"/>
</dbReference>
<dbReference type="Antibodypedia" id="755">
    <property type="antibodies" value="1339 antibodies from 37 providers"/>
</dbReference>
<dbReference type="DNASU" id="17260"/>
<dbReference type="Ensembl" id="ENSMUST00000185052.6">
    <molecule id="Q8CFN5-5"/>
    <property type="protein sequence ID" value="ENSMUSP00000138826.3"/>
    <property type="gene ID" value="ENSMUSG00000005583.17"/>
</dbReference>
<dbReference type="Ensembl" id="ENSMUST00000197146.5">
    <molecule id="Q8CFN5-3"/>
    <property type="protein sequence ID" value="ENSMUSP00000143227.2"/>
    <property type="gene ID" value="ENSMUSG00000005583.17"/>
</dbReference>
<dbReference type="Ensembl" id="ENSMUST00000197681.5">
    <molecule id="Q8CFN5-3"/>
    <property type="protein sequence ID" value="ENSMUSP00000143420.2"/>
    <property type="gene ID" value="ENSMUSG00000005583.17"/>
</dbReference>
<dbReference type="Ensembl" id="ENSMUST00000198199.5">
    <molecule id="Q8CFN5-4"/>
    <property type="protein sequence ID" value="ENSMUSP00000143742.2"/>
    <property type="gene ID" value="ENSMUSG00000005583.17"/>
</dbReference>
<dbReference type="Ensembl" id="ENSMUST00000199019.5">
    <molecule id="Q8CFN5-1"/>
    <property type="protein sequence ID" value="ENSMUSP00000143401.2"/>
    <property type="gene ID" value="ENSMUSG00000005583.17"/>
</dbReference>
<dbReference type="Ensembl" id="ENSMUST00000199105.5">
    <molecule id="Q8CFN5-1"/>
    <property type="protein sequence ID" value="ENSMUSP00000143212.2"/>
    <property type="gene ID" value="ENSMUSG00000005583.17"/>
</dbReference>
<dbReference type="Ensembl" id="ENSMUST00000199450.5">
    <molecule id="Q8CFN5-2"/>
    <property type="protein sequence ID" value="ENSMUSP00000143315.2"/>
    <property type="gene ID" value="ENSMUSG00000005583.17"/>
</dbReference>
<dbReference type="GeneID" id="17260"/>
<dbReference type="KEGG" id="mmu:17260"/>
<dbReference type="UCSC" id="uc007rie.2">
    <molecule id="Q8CFN5-4"/>
    <property type="organism name" value="mouse"/>
</dbReference>
<dbReference type="UCSC" id="uc007rih.2">
    <molecule id="Q8CFN5-5"/>
    <property type="organism name" value="mouse"/>
</dbReference>
<dbReference type="UCSC" id="uc007rii.3">
    <molecule id="Q8CFN5-3"/>
    <property type="organism name" value="mouse"/>
</dbReference>
<dbReference type="AGR" id="MGI:99458"/>
<dbReference type="CTD" id="4208"/>
<dbReference type="MGI" id="MGI:99458">
    <property type="gene designation" value="Mef2c"/>
</dbReference>
<dbReference type="VEuPathDB" id="HostDB:ENSMUSG00000005583"/>
<dbReference type="eggNOG" id="KOG0014">
    <property type="taxonomic scope" value="Eukaryota"/>
</dbReference>
<dbReference type="GeneTree" id="ENSGT00940000157492"/>
<dbReference type="InParanoid" id="Q8CFN5"/>
<dbReference type="OrthoDB" id="1898716at2759"/>
<dbReference type="PhylomeDB" id="Q8CFN5"/>
<dbReference type="TreeFam" id="TF314067"/>
<dbReference type="Reactome" id="R-MMU-525793">
    <property type="pathway name" value="Myogenesis"/>
</dbReference>
<dbReference type="BioGRID-ORCS" id="17260">
    <property type="hits" value="2 hits in 31 CRISPR screens"/>
</dbReference>
<dbReference type="ChiTaRS" id="Mef2c">
    <property type="organism name" value="mouse"/>
</dbReference>
<dbReference type="PRO" id="PR:Q8CFN5"/>
<dbReference type="Proteomes" id="UP000000589">
    <property type="component" value="Chromosome 13"/>
</dbReference>
<dbReference type="RNAct" id="Q8CFN5">
    <property type="molecule type" value="protein"/>
</dbReference>
<dbReference type="Bgee" id="ENSMUSG00000005583">
    <property type="expression patterns" value="Expressed in barrel cortex and 323 other cell types or tissues"/>
</dbReference>
<dbReference type="ExpressionAtlas" id="Q8CFN5">
    <property type="expression patterns" value="baseline and differential"/>
</dbReference>
<dbReference type="GO" id="GO:0005737">
    <property type="term" value="C:cytoplasm"/>
    <property type="evidence" value="ECO:0000250"/>
    <property type="project" value="UniProtKB"/>
</dbReference>
<dbReference type="GO" id="GO:0005829">
    <property type="term" value="C:cytosol"/>
    <property type="evidence" value="ECO:0000250"/>
    <property type="project" value="Alzheimers_University_of_Toronto"/>
</dbReference>
<dbReference type="GO" id="GO:0016607">
    <property type="term" value="C:nuclear speck"/>
    <property type="evidence" value="ECO:0000250"/>
    <property type="project" value="UniProtKB"/>
</dbReference>
<dbReference type="GO" id="GO:0005654">
    <property type="term" value="C:nucleoplasm"/>
    <property type="evidence" value="ECO:0000304"/>
    <property type="project" value="Reactome"/>
</dbReference>
<dbReference type="GO" id="GO:0005634">
    <property type="term" value="C:nucleus"/>
    <property type="evidence" value="ECO:0000314"/>
    <property type="project" value="UniProtKB"/>
</dbReference>
<dbReference type="GO" id="GO:0098794">
    <property type="term" value="C:postsynapse"/>
    <property type="evidence" value="ECO:0007669"/>
    <property type="project" value="GOC"/>
</dbReference>
<dbReference type="GO" id="GO:0032991">
    <property type="term" value="C:protein-containing complex"/>
    <property type="evidence" value="ECO:0000250"/>
    <property type="project" value="UniProtKB"/>
</dbReference>
<dbReference type="GO" id="GO:0016528">
    <property type="term" value="C:sarcoplasm"/>
    <property type="evidence" value="ECO:0007669"/>
    <property type="project" value="UniProtKB-SubCell"/>
</dbReference>
<dbReference type="GO" id="GO:0003682">
    <property type="term" value="F:chromatin binding"/>
    <property type="evidence" value="ECO:0000314"/>
    <property type="project" value="MGI"/>
</dbReference>
<dbReference type="GO" id="GO:0000987">
    <property type="term" value="F:cis-regulatory region sequence-specific DNA binding"/>
    <property type="evidence" value="ECO:0000314"/>
    <property type="project" value="MGI"/>
</dbReference>
<dbReference type="GO" id="GO:0003677">
    <property type="term" value="F:DNA binding"/>
    <property type="evidence" value="ECO:0000314"/>
    <property type="project" value="MGI"/>
</dbReference>
<dbReference type="GO" id="GO:0001228">
    <property type="term" value="F:DNA-binding transcription activator activity, RNA polymerase II-specific"/>
    <property type="evidence" value="ECO:0000314"/>
    <property type="project" value="NTNU_SB"/>
</dbReference>
<dbReference type="GO" id="GO:0003700">
    <property type="term" value="F:DNA-binding transcription factor activity"/>
    <property type="evidence" value="ECO:0000314"/>
    <property type="project" value="MGI"/>
</dbReference>
<dbReference type="GO" id="GO:0000981">
    <property type="term" value="F:DNA-binding transcription factor activity, RNA polymerase II-specific"/>
    <property type="evidence" value="ECO:0000314"/>
    <property type="project" value="UniProtKB"/>
</dbReference>
<dbReference type="GO" id="GO:0042826">
    <property type="term" value="F:histone deacetylase binding"/>
    <property type="evidence" value="ECO:0000353"/>
    <property type="project" value="BHF-UCL"/>
</dbReference>
<dbReference type="GO" id="GO:0071837">
    <property type="term" value="F:HMG box domain binding"/>
    <property type="evidence" value="ECO:0000353"/>
    <property type="project" value="UniProtKB"/>
</dbReference>
<dbReference type="GO" id="GO:0046983">
    <property type="term" value="F:protein dimerization activity"/>
    <property type="evidence" value="ECO:0007669"/>
    <property type="project" value="InterPro"/>
</dbReference>
<dbReference type="GO" id="GO:0000978">
    <property type="term" value="F:RNA polymerase II cis-regulatory region sequence-specific DNA binding"/>
    <property type="evidence" value="ECO:0000314"/>
    <property type="project" value="UniProtKB"/>
</dbReference>
<dbReference type="GO" id="GO:0000977">
    <property type="term" value="F:RNA polymerase II transcription regulatory region sequence-specific DNA binding"/>
    <property type="evidence" value="ECO:0000314"/>
    <property type="project" value="UniProtKB"/>
</dbReference>
<dbReference type="GO" id="GO:0043565">
    <property type="term" value="F:sequence-specific DNA binding"/>
    <property type="evidence" value="ECO:0000314"/>
    <property type="project" value="UniProtKB"/>
</dbReference>
<dbReference type="GO" id="GO:0000976">
    <property type="term" value="F:transcription cis-regulatory region binding"/>
    <property type="evidence" value="ECO:0000314"/>
    <property type="project" value="BHF-UCL"/>
</dbReference>
<dbReference type="GO" id="GO:0098990">
    <property type="term" value="P:AMPA selective glutamate receptor signaling pathway"/>
    <property type="evidence" value="ECO:0000315"/>
    <property type="project" value="Alzheimers_University_of_Toronto"/>
</dbReference>
<dbReference type="GO" id="GO:0006915">
    <property type="term" value="P:apoptotic process"/>
    <property type="evidence" value="ECO:0007669"/>
    <property type="project" value="UniProtKB-KW"/>
</dbReference>
<dbReference type="GO" id="GO:0007411">
    <property type="term" value="P:axon guidance"/>
    <property type="evidence" value="ECO:0000315"/>
    <property type="project" value="MGI"/>
</dbReference>
<dbReference type="GO" id="GO:0001782">
    <property type="term" value="P:B cell homeostasis"/>
    <property type="evidence" value="ECO:0000315"/>
    <property type="project" value="UniProtKB"/>
</dbReference>
<dbReference type="GO" id="GO:0042100">
    <property type="term" value="P:B cell proliferation"/>
    <property type="evidence" value="ECO:0000315"/>
    <property type="project" value="UniProtKB"/>
</dbReference>
<dbReference type="GO" id="GO:0050853">
    <property type="term" value="P:B cell receptor signaling pathway"/>
    <property type="evidence" value="ECO:0000315"/>
    <property type="project" value="UniProtKB"/>
</dbReference>
<dbReference type="GO" id="GO:0001568">
    <property type="term" value="P:blood vessel development"/>
    <property type="evidence" value="ECO:0000315"/>
    <property type="project" value="MGI"/>
</dbReference>
<dbReference type="GO" id="GO:0001974">
    <property type="term" value="P:blood vessel remodeling"/>
    <property type="evidence" value="ECO:0000315"/>
    <property type="project" value="MGI"/>
</dbReference>
<dbReference type="GO" id="GO:0055007">
    <property type="term" value="P:cardiac muscle cell differentiation"/>
    <property type="evidence" value="ECO:0000316"/>
    <property type="project" value="MGI"/>
</dbReference>
<dbReference type="GO" id="GO:0014898">
    <property type="term" value="P:cardiac muscle hypertrophy in response to stress"/>
    <property type="evidence" value="ECO:0000315"/>
    <property type="project" value="MGI"/>
</dbReference>
<dbReference type="GO" id="GO:0003211">
    <property type="term" value="P:cardiac ventricle formation"/>
    <property type="evidence" value="ECO:0000315"/>
    <property type="project" value="UniProtKB"/>
</dbReference>
<dbReference type="GO" id="GO:0060536">
    <property type="term" value="P:cartilage morphogenesis"/>
    <property type="evidence" value="ECO:0000315"/>
    <property type="project" value="MGI"/>
</dbReference>
<dbReference type="GO" id="GO:0045165">
    <property type="term" value="P:cell fate commitment"/>
    <property type="evidence" value="ECO:0000315"/>
    <property type="project" value="MGI"/>
</dbReference>
<dbReference type="GO" id="GO:0048667">
    <property type="term" value="P:cell morphogenesis involved in neuron differentiation"/>
    <property type="evidence" value="ECO:0000315"/>
    <property type="project" value="Alzheimers_University_of_Toronto"/>
</dbReference>
<dbReference type="GO" id="GO:0071838">
    <property type="term" value="P:cell proliferation in bone marrow"/>
    <property type="evidence" value="ECO:0000316"/>
    <property type="project" value="MGI"/>
</dbReference>
<dbReference type="GO" id="GO:0071277">
    <property type="term" value="P:cellular response to calcium ion"/>
    <property type="evidence" value="ECO:0000314"/>
    <property type="project" value="UniProtKB"/>
</dbReference>
<dbReference type="GO" id="GO:0071498">
    <property type="term" value="P:cellular response to fluid shear stress"/>
    <property type="evidence" value="ECO:0000314"/>
    <property type="project" value="UniProtKB"/>
</dbReference>
<dbReference type="GO" id="GO:0071222">
    <property type="term" value="P:cellular response to lipopolysaccharide"/>
    <property type="evidence" value="ECO:0000314"/>
    <property type="project" value="UniProtKB"/>
</dbReference>
<dbReference type="GO" id="GO:0071374">
    <property type="term" value="P:cellular response to parathyroid hormone stimulus"/>
    <property type="evidence" value="ECO:0000250"/>
    <property type="project" value="UniProtKB"/>
</dbReference>
<dbReference type="GO" id="GO:0071560">
    <property type="term" value="P:cellular response to transforming growth factor beta stimulus"/>
    <property type="evidence" value="ECO:0000250"/>
    <property type="project" value="UniProtKB"/>
</dbReference>
<dbReference type="GO" id="GO:0035984">
    <property type="term" value="P:cellular response to trichostatin A"/>
    <property type="evidence" value="ECO:0000314"/>
    <property type="project" value="UniProtKB"/>
</dbReference>
<dbReference type="GO" id="GO:0071466">
    <property type="term" value="P:cellular response to xenobiotic stimulus"/>
    <property type="evidence" value="ECO:0000314"/>
    <property type="project" value="UniProtKB"/>
</dbReference>
<dbReference type="GO" id="GO:0002062">
    <property type="term" value="P:chondrocyte differentiation"/>
    <property type="evidence" value="ECO:0000316"/>
    <property type="project" value="MGI"/>
</dbReference>
<dbReference type="GO" id="GO:0035050">
    <property type="term" value="P:embryonic heart tube development"/>
    <property type="evidence" value="ECO:0000315"/>
    <property type="project" value="MGI"/>
</dbReference>
<dbReference type="GO" id="GO:0048704">
    <property type="term" value="P:embryonic skeletal system morphogenesis"/>
    <property type="evidence" value="ECO:0000315"/>
    <property type="project" value="MGI"/>
</dbReference>
<dbReference type="GO" id="GO:0048703">
    <property type="term" value="P:embryonic viscerocranium morphogenesis"/>
    <property type="evidence" value="ECO:0000315"/>
    <property type="project" value="MGI"/>
</dbReference>
<dbReference type="GO" id="GO:0001958">
    <property type="term" value="P:endochondral ossification"/>
    <property type="evidence" value="ECO:0000315"/>
    <property type="project" value="MGI"/>
</dbReference>
<dbReference type="GO" id="GO:2001013">
    <property type="term" value="P:epithelial cell proliferation involved in renal tubule morphogenesis"/>
    <property type="evidence" value="ECO:0000315"/>
    <property type="project" value="UniProtKB"/>
</dbReference>
<dbReference type="GO" id="GO:0060079">
    <property type="term" value="P:excitatory postsynaptic potential"/>
    <property type="evidence" value="ECO:0000315"/>
    <property type="project" value="Alzheimers_University_of_Toronto"/>
</dbReference>
<dbReference type="GO" id="GO:0010467">
    <property type="term" value="P:gene expression"/>
    <property type="evidence" value="ECO:0000315"/>
    <property type="project" value="MGI"/>
</dbReference>
<dbReference type="GO" id="GO:0002467">
    <property type="term" value="P:germinal center formation"/>
    <property type="evidence" value="ECO:0000315"/>
    <property type="project" value="UniProtKB"/>
</dbReference>
<dbReference type="GO" id="GO:0072102">
    <property type="term" value="P:glomerulus morphogenesis"/>
    <property type="evidence" value="ECO:0000315"/>
    <property type="project" value="UniProtKB"/>
</dbReference>
<dbReference type="GO" id="GO:0007507">
    <property type="term" value="P:heart development"/>
    <property type="evidence" value="ECO:0000315"/>
    <property type="project" value="MGI"/>
</dbReference>
<dbReference type="GO" id="GO:0001947">
    <property type="term" value="P:heart looping"/>
    <property type="evidence" value="ECO:0000315"/>
    <property type="project" value="UniProtKB"/>
</dbReference>
<dbReference type="GO" id="GO:0006959">
    <property type="term" value="P:humoral immune response"/>
    <property type="evidence" value="ECO:0000315"/>
    <property type="project" value="UniProtKB"/>
</dbReference>
<dbReference type="GO" id="GO:0007611">
    <property type="term" value="P:learning or memory"/>
    <property type="evidence" value="ECO:0000315"/>
    <property type="project" value="UniProtKB"/>
</dbReference>
<dbReference type="GO" id="GO:0000165">
    <property type="term" value="P:MAPK cascade"/>
    <property type="evidence" value="ECO:0000314"/>
    <property type="project" value="UniProtKB"/>
</dbReference>
<dbReference type="GO" id="GO:0030318">
    <property type="term" value="P:melanocyte differentiation"/>
    <property type="evidence" value="ECO:0000315"/>
    <property type="project" value="UniProtKB"/>
</dbReference>
<dbReference type="GO" id="GO:0030224">
    <property type="term" value="P:monocyte differentiation"/>
    <property type="evidence" value="ECO:0000315"/>
    <property type="project" value="MGI"/>
</dbReference>
<dbReference type="GO" id="GO:0007521">
    <property type="term" value="P:muscle cell fate determination"/>
    <property type="evidence" value="ECO:0000315"/>
    <property type="project" value="MGI"/>
</dbReference>
<dbReference type="GO" id="GO:0050680">
    <property type="term" value="P:negative regulation of epithelial cell proliferation"/>
    <property type="evidence" value="ECO:0000315"/>
    <property type="project" value="UniProtKB"/>
</dbReference>
<dbReference type="GO" id="GO:0010629">
    <property type="term" value="P:negative regulation of gene expression"/>
    <property type="evidence" value="ECO:0000315"/>
    <property type="project" value="UniProtKB"/>
</dbReference>
<dbReference type="GO" id="GO:0043524">
    <property type="term" value="P:negative regulation of neuron apoptotic process"/>
    <property type="evidence" value="ECO:0000314"/>
    <property type="project" value="UniProtKB"/>
</dbReference>
<dbReference type="GO" id="GO:0030279">
    <property type="term" value="P:negative regulation of ossification"/>
    <property type="evidence" value="ECO:0000250"/>
    <property type="project" value="UniProtKB"/>
</dbReference>
<dbReference type="GO" id="GO:0000122">
    <property type="term" value="P:negative regulation of transcription by RNA polymerase II"/>
    <property type="evidence" value="ECO:0000316"/>
    <property type="project" value="MGI"/>
</dbReference>
<dbReference type="GO" id="GO:0072160">
    <property type="term" value="P:nephron tubule epithelial cell differentiation"/>
    <property type="evidence" value="ECO:0000315"/>
    <property type="project" value="UniProtKB"/>
</dbReference>
<dbReference type="GO" id="GO:0014033">
    <property type="term" value="P:neural crest cell differentiation"/>
    <property type="evidence" value="ECO:0000315"/>
    <property type="project" value="UniProtKB"/>
</dbReference>
<dbReference type="GO" id="GO:0048666">
    <property type="term" value="P:neuron development"/>
    <property type="evidence" value="ECO:0000315"/>
    <property type="project" value="UniProtKB"/>
</dbReference>
<dbReference type="GO" id="GO:0030182">
    <property type="term" value="P:neuron differentiation"/>
    <property type="evidence" value="ECO:0000315"/>
    <property type="project" value="UniProtKB"/>
</dbReference>
<dbReference type="GO" id="GO:0001764">
    <property type="term" value="P:neuron migration"/>
    <property type="evidence" value="ECO:0000315"/>
    <property type="project" value="Alzheimers_University_of_Toronto"/>
</dbReference>
<dbReference type="GO" id="GO:0098989">
    <property type="term" value="P:NMDA selective glutamate receptor signaling pathway"/>
    <property type="evidence" value="ECO:0000315"/>
    <property type="project" value="Alzheimers_University_of_Toronto"/>
</dbReference>
<dbReference type="GO" id="GO:0001649">
    <property type="term" value="P:osteoblast differentiation"/>
    <property type="evidence" value="ECO:0000316"/>
    <property type="project" value="MGI"/>
</dbReference>
<dbReference type="GO" id="GO:0003151">
    <property type="term" value="P:outflow tract morphogenesis"/>
    <property type="evidence" value="ECO:0000316"/>
    <property type="project" value="MGI"/>
</dbReference>
<dbReference type="GO" id="GO:0030220">
    <property type="term" value="P:platelet formation"/>
    <property type="evidence" value="ECO:0000315"/>
    <property type="project" value="UniProtKB"/>
</dbReference>
<dbReference type="GO" id="GO:0030890">
    <property type="term" value="P:positive regulation of B cell proliferation"/>
    <property type="evidence" value="ECO:0000315"/>
    <property type="project" value="UniProtKB"/>
</dbReference>
<dbReference type="GO" id="GO:2000987">
    <property type="term" value="P:positive regulation of behavioral fear response"/>
    <property type="evidence" value="ECO:0000315"/>
    <property type="project" value="UniProtKB"/>
</dbReference>
<dbReference type="GO" id="GO:0030501">
    <property type="term" value="P:positive regulation of bone mineralization"/>
    <property type="evidence" value="ECO:0000315"/>
    <property type="project" value="UniProtKB"/>
</dbReference>
<dbReference type="GO" id="GO:2000727">
    <property type="term" value="P:positive regulation of cardiac muscle cell differentiation"/>
    <property type="evidence" value="ECO:0000315"/>
    <property type="project" value="UniProtKB"/>
</dbReference>
<dbReference type="GO" id="GO:0060045">
    <property type="term" value="P:positive regulation of cardiac muscle cell proliferation"/>
    <property type="evidence" value="ECO:0000315"/>
    <property type="project" value="UniProtKB"/>
</dbReference>
<dbReference type="GO" id="GO:0071864">
    <property type="term" value="P:positive regulation of cell proliferation in bone marrow"/>
    <property type="evidence" value="ECO:0000316"/>
    <property type="project" value="MGI"/>
</dbReference>
<dbReference type="GO" id="GO:0045893">
    <property type="term" value="P:positive regulation of DNA-templated transcription"/>
    <property type="evidence" value="ECO:0000314"/>
    <property type="project" value="UniProtKB"/>
</dbReference>
<dbReference type="GO" id="GO:0010628">
    <property type="term" value="P:positive regulation of gene expression"/>
    <property type="evidence" value="ECO:0000314"/>
    <property type="project" value="UniProtKB"/>
</dbReference>
<dbReference type="GO" id="GO:2000111">
    <property type="term" value="P:positive regulation of macrophage apoptotic process"/>
    <property type="evidence" value="ECO:0000315"/>
    <property type="project" value="UniProtKB"/>
</dbReference>
<dbReference type="GO" id="GO:0043410">
    <property type="term" value="P:positive regulation of MAPK cascade"/>
    <property type="evidence" value="ECO:0000250"/>
    <property type="project" value="Alzheimers_University_of_Toronto"/>
</dbReference>
<dbReference type="GO" id="GO:0045663">
    <property type="term" value="P:positive regulation of myoblast differentiation"/>
    <property type="evidence" value="ECO:0000250"/>
    <property type="project" value="UniProtKB"/>
</dbReference>
<dbReference type="GO" id="GO:0045666">
    <property type="term" value="P:positive regulation of neuron differentiation"/>
    <property type="evidence" value="ECO:0000314"/>
    <property type="project" value="UniProtKB"/>
</dbReference>
<dbReference type="GO" id="GO:0045669">
    <property type="term" value="P:positive regulation of osteoblast differentiation"/>
    <property type="evidence" value="ECO:0000315"/>
    <property type="project" value="UniProtKB"/>
</dbReference>
<dbReference type="GO" id="GO:0048643">
    <property type="term" value="P:positive regulation of skeletal muscle tissue development"/>
    <property type="evidence" value="ECO:0000250"/>
    <property type="project" value="UniProtKB"/>
</dbReference>
<dbReference type="GO" id="GO:0045944">
    <property type="term" value="P:positive regulation of transcription by RNA polymerase II"/>
    <property type="evidence" value="ECO:0000314"/>
    <property type="project" value="NTNU_SB"/>
</dbReference>
<dbReference type="GO" id="GO:0003138">
    <property type="term" value="P:primary heart field specification"/>
    <property type="evidence" value="ECO:0000315"/>
    <property type="project" value="UniProtKB"/>
</dbReference>
<dbReference type="GO" id="GO:0060998">
    <property type="term" value="P:regulation of dendritic spine development"/>
    <property type="evidence" value="ECO:0000315"/>
    <property type="project" value="Alzheimers_University_of_Toronto"/>
</dbReference>
<dbReference type="GO" id="GO:0006355">
    <property type="term" value="P:regulation of DNA-templated transcription"/>
    <property type="evidence" value="ECO:0000314"/>
    <property type="project" value="MGI"/>
</dbReference>
<dbReference type="GO" id="GO:0002634">
    <property type="term" value="P:regulation of germinal center formation"/>
    <property type="evidence" value="ECO:0000315"/>
    <property type="project" value="UniProtKB"/>
</dbReference>
<dbReference type="GO" id="GO:0045652">
    <property type="term" value="P:regulation of megakaryocyte differentiation"/>
    <property type="evidence" value="ECO:0000315"/>
    <property type="project" value="UniProtKB"/>
</dbReference>
<dbReference type="GO" id="GO:0043523">
    <property type="term" value="P:regulation of neuron apoptotic process"/>
    <property type="evidence" value="ECO:0000315"/>
    <property type="project" value="Alzheimers_University_of_Toronto"/>
</dbReference>
<dbReference type="GO" id="GO:0046928">
    <property type="term" value="P:regulation of neurotransmitter secretion"/>
    <property type="evidence" value="ECO:0000315"/>
    <property type="project" value="Alzheimers_University_of_Toronto"/>
</dbReference>
<dbReference type="GO" id="GO:0060297">
    <property type="term" value="P:regulation of sarcomere organization"/>
    <property type="evidence" value="ECO:0000315"/>
    <property type="project" value="MGI"/>
</dbReference>
<dbReference type="GO" id="GO:0051963">
    <property type="term" value="P:regulation of synapse assembly"/>
    <property type="evidence" value="ECO:0000315"/>
    <property type="project" value="Alzheimers_University_of_Toronto"/>
</dbReference>
<dbReference type="GO" id="GO:0060025">
    <property type="term" value="P:regulation of synaptic activity"/>
    <property type="evidence" value="ECO:0000315"/>
    <property type="project" value="UniProtKB"/>
</dbReference>
<dbReference type="GO" id="GO:0048167">
    <property type="term" value="P:regulation of synaptic plasticity"/>
    <property type="evidence" value="ECO:0000315"/>
    <property type="project" value="Alzheimers_University_of_Toronto"/>
</dbReference>
<dbReference type="GO" id="GO:0051966">
    <property type="term" value="P:regulation of synaptic transmission, glutamatergic"/>
    <property type="evidence" value="ECO:0000315"/>
    <property type="project" value="Alzheimers_University_of_Toronto"/>
</dbReference>
<dbReference type="GO" id="GO:0061333">
    <property type="term" value="P:renal tubule morphogenesis"/>
    <property type="evidence" value="ECO:0000315"/>
    <property type="project" value="UniProtKB"/>
</dbReference>
<dbReference type="GO" id="GO:0002931">
    <property type="term" value="P:response to ischemia"/>
    <property type="evidence" value="ECO:0000250"/>
    <property type="project" value="Alzheimers_University_of_Toronto"/>
</dbReference>
<dbReference type="GO" id="GO:0060021">
    <property type="term" value="P:roof of mouth development"/>
    <property type="evidence" value="ECO:0000316"/>
    <property type="project" value="MGI"/>
</dbReference>
<dbReference type="GO" id="GO:0003139">
    <property type="term" value="P:secondary heart field specification"/>
    <property type="evidence" value="ECO:0000315"/>
    <property type="project" value="UniProtKB"/>
</dbReference>
<dbReference type="GO" id="GO:1902287">
    <property type="term" value="P:semaphorin-plexin signaling pathway involved in axon guidance"/>
    <property type="evidence" value="ECO:0000315"/>
    <property type="project" value="MGI"/>
</dbReference>
<dbReference type="GO" id="GO:0003185">
    <property type="term" value="P:sinoatrial valve morphogenesis"/>
    <property type="evidence" value="ECO:0000315"/>
    <property type="project" value="UniProtKB"/>
</dbReference>
<dbReference type="GO" id="GO:0035914">
    <property type="term" value="P:skeletal muscle cell differentiation"/>
    <property type="evidence" value="ECO:0000315"/>
    <property type="project" value="MGI"/>
</dbReference>
<dbReference type="GO" id="GO:0007519">
    <property type="term" value="P:skeletal muscle tissue development"/>
    <property type="evidence" value="ECO:0000315"/>
    <property type="project" value="MGI"/>
</dbReference>
<dbReference type="GO" id="GO:0051145">
    <property type="term" value="P:smooth muscle cell differentiation"/>
    <property type="evidence" value="ECO:0000315"/>
    <property type="project" value="MGI"/>
</dbReference>
<dbReference type="GO" id="GO:0097492">
    <property type="term" value="P:sympathetic neuron axon guidance"/>
    <property type="evidence" value="ECO:0000315"/>
    <property type="project" value="MGI"/>
</dbReference>
<dbReference type="GO" id="GO:0055012">
    <property type="term" value="P:ventricular cardiac muscle cell differentiation"/>
    <property type="evidence" value="ECO:0000315"/>
    <property type="project" value="UniProtKB"/>
</dbReference>
<dbReference type="CDD" id="cd00265">
    <property type="entry name" value="MADS_MEF2_like"/>
    <property type="match status" value="1"/>
</dbReference>
<dbReference type="FunFam" id="3.40.1810.10:FF:000001">
    <property type="entry name" value="Myocyte-specific enhancer factor 2A homolog"/>
    <property type="match status" value="1"/>
</dbReference>
<dbReference type="Gene3D" id="3.40.1810.10">
    <property type="entry name" value="Transcription factor, MADS-box"/>
    <property type="match status" value="1"/>
</dbReference>
<dbReference type="InterPro" id="IPR022102">
    <property type="entry name" value="HJURP_C"/>
</dbReference>
<dbReference type="InterPro" id="IPR033896">
    <property type="entry name" value="MEF2-like_N"/>
</dbReference>
<dbReference type="InterPro" id="IPR002100">
    <property type="entry name" value="TF_MADSbox"/>
</dbReference>
<dbReference type="InterPro" id="IPR036879">
    <property type="entry name" value="TF_MADSbox_sf"/>
</dbReference>
<dbReference type="PANTHER" id="PTHR11945">
    <property type="entry name" value="MADS BOX PROTEIN"/>
    <property type="match status" value="1"/>
</dbReference>
<dbReference type="PANTHER" id="PTHR11945:SF534">
    <property type="entry name" value="MYOCYTE-SPECIFIC ENHANCER FACTOR 2"/>
    <property type="match status" value="1"/>
</dbReference>
<dbReference type="Pfam" id="PF12347">
    <property type="entry name" value="HJURP_C"/>
    <property type="match status" value="1"/>
</dbReference>
<dbReference type="Pfam" id="PF00319">
    <property type="entry name" value="SRF-TF"/>
    <property type="match status" value="1"/>
</dbReference>
<dbReference type="PRINTS" id="PR00404">
    <property type="entry name" value="MADSDOMAIN"/>
</dbReference>
<dbReference type="SMART" id="SM00432">
    <property type="entry name" value="MADS"/>
    <property type="match status" value="1"/>
</dbReference>
<dbReference type="SUPFAM" id="SSF55455">
    <property type="entry name" value="SRF-like"/>
    <property type="match status" value="1"/>
</dbReference>
<dbReference type="PROSITE" id="PS00350">
    <property type="entry name" value="MADS_BOX_1"/>
    <property type="match status" value="1"/>
</dbReference>
<dbReference type="PROSITE" id="PS50066">
    <property type="entry name" value="MADS_BOX_2"/>
    <property type="match status" value="1"/>
</dbReference>
<proteinExistence type="evidence at protein level"/>
<protein>
    <recommendedName>
        <fullName evidence="31">Myocyte-specific enhancer factor 2C</fullName>
    </recommendedName>
    <alternativeName>
        <fullName evidence="32">Myocyte enhancer factor 2C</fullName>
    </alternativeName>
</protein>
<keyword id="KW-0002">3D-structure</keyword>
<keyword id="KW-0007">Acetylation</keyword>
<keyword id="KW-0010">Activator</keyword>
<keyword id="KW-0025">Alternative splicing</keyword>
<keyword id="KW-0053">Apoptosis</keyword>
<keyword id="KW-0963">Cytoplasm</keyword>
<keyword id="KW-0217">Developmental protein</keyword>
<keyword id="KW-0221">Differentiation</keyword>
<keyword id="KW-0238">DNA-binding</keyword>
<keyword id="KW-1017">Isopeptide bond</keyword>
<keyword id="KW-0524">Neurogenesis</keyword>
<keyword id="KW-0539">Nucleus</keyword>
<keyword id="KW-0597">Phosphoprotein</keyword>
<keyword id="KW-1185">Reference proteome</keyword>
<keyword id="KW-0804">Transcription</keyword>
<keyword id="KW-0805">Transcription regulation</keyword>
<keyword id="KW-0832">Ubl conjugation</keyword>
<accession>Q8CFN5</accession>
<accession>Q8R0H1</accession>
<accession>Q9D7L0</accession>
<accession>Q9QW20</accession>
<reference key="1">
    <citation type="journal article" date="1993" name="Proc. Natl. Acad. Sci. U.S.A.">
        <title>Myocyte enhancer factor (MEF) 2C: a tissue-restricted member of the MEF-2 family of transcription factors.</title>
        <authorList>
            <person name="Martin J.F."/>
            <person name="Schwarz J.J."/>
            <person name="Olson E.N."/>
        </authorList>
    </citation>
    <scope>NUCLEOTIDE SEQUENCE [MRNA] (ISOFORM 2)</scope>
    <scope>TISSUE SPECIFICITY</scope>
</reference>
<reference key="2">
    <citation type="journal article" date="2005" name="Science">
        <title>The transcriptional landscape of the mammalian genome.</title>
        <authorList>
            <person name="Carninci P."/>
            <person name="Kasukawa T."/>
            <person name="Katayama S."/>
            <person name="Gough J."/>
            <person name="Frith M.C."/>
            <person name="Maeda N."/>
            <person name="Oyama R."/>
            <person name="Ravasi T."/>
            <person name="Lenhard B."/>
            <person name="Wells C."/>
            <person name="Kodzius R."/>
            <person name="Shimokawa K."/>
            <person name="Bajic V.B."/>
            <person name="Brenner S.E."/>
            <person name="Batalov S."/>
            <person name="Forrest A.R."/>
            <person name="Zavolan M."/>
            <person name="Davis M.J."/>
            <person name="Wilming L.G."/>
            <person name="Aidinis V."/>
            <person name="Allen J.E."/>
            <person name="Ambesi-Impiombato A."/>
            <person name="Apweiler R."/>
            <person name="Aturaliya R.N."/>
            <person name="Bailey T.L."/>
            <person name="Bansal M."/>
            <person name="Baxter L."/>
            <person name="Beisel K.W."/>
            <person name="Bersano T."/>
            <person name="Bono H."/>
            <person name="Chalk A.M."/>
            <person name="Chiu K.P."/>
            <person name="Choudhary V."/>
            <person name="Christoffels A."/>
            <person name="Clutterbuck D.R."/>
            <person name="Crowe M.L."/>
            <person name="Dalla E."/>
            <person name="Dalrymple B.P."/>
            <person name="de Bono B."/>
            <person name="Della Gatta G."/>
            <person name="di Bernardo D."/>
            <person name="Down T."/>
            <person name="Engstrom P."/>
            <person name="Fagiolini M."/>
            <person name="Faulkner G."/>
            <person name="Fletcher C.F."/>
            <person name="Fukushima T."/>
            <person name="Furuno M."/>
            <person name="Futaki S."/>
            <person name="Gariboldi M."/>
            <person name="Georgii-Hemming P."/>
            <person name="Gingeras T.R."/>
            <person name="Gojobori T."/>
            <person name="Green R.E."/>
            <person name="Gustincich S."/>
            <person name="Harbers M."/>
            <person name="Hayashi Y."/>
            <person name="Hensch T.K."/>
            <person name="Hirokawa N."/>
            <person name="Hill D."/>
            <person name="Huminiecki L."/>
            <person name="Iacono M."/>
            <person name="Ikeo K."/>
            <person name="Iwama A."/>
            <person name="Ishikawa T."/>
            <person name="Jakt M."/>
            <person name="Kanapin A."/>
            <person name="Katoh M."/>
            <person name="Kawasawa Y."/>
            <person name="Kelso J."/>
            <person name="Kitamura H."/>
            <person name="Kitano H."/>
            <person name="Kollias G."/>
            <person name="Krishnan S.P."/>
            <person name="Kruger A."/>
            <person name="Kummerfeld S.K."/>
            <person name="Kurochkin I.V."/>
            <person name="Lareau L.F."/>
            <person name="Lazarevic D."/>
            <person name="Lipovich L."/>
            <person name="Liu J."/>
            <person name="Liuni S."/>
            <person name="McWilliam S."/>
            <person name="Madan Babu M."/>
            <person name="Madera M."/>
            <person name="Marchionni L."/>
            <person name="Matsuda H."/>
            <person name="Matsuzawa S."/>
            <person name="Miki H."/>
            <person name="Mignone F."/>
            <person name="Miyake S."/>
            <person name="Morris K."/>
            <person name="Mottagui-Tabar S."/>
            <person name="Mulder N."/>
            <person name="Nakano N."/>
            <person name="Nakauchi H."/>
            <person name="Ng P."/>
            <person name="Nilsson R."/>
            <person name="Nishiguchi S."/>
            <person name="Nishikawa S."/>
            <person name="Nori F."/>
            <person name="Ohara O."/>
            <person name="Okazaki Y."/>
            <person name="Orlando V."/>
            <person name="Pang K.C."/>
            <person name="Pavan W.J."/>
            <person name="Pavesi G."/>
            <person name="Pesole G."/>
            <person name="Petrovsky N."/>
            <person name="Piazza S."/>
            <person name="Reed J."/>
            <person name="Reid J.F."/>
            <person name="Ring B.Z."/>
            <person name="Ringwald M."/>
            <person name="Rost B."/>
            <person name="Ruan Y."/>
            <person name="Salzberg S.L."/>
            <person name="Sandelin A."/>
            <person name="Schneider C."/>
            <person name="Schoenbach C."/>
            <person name="Sekiguchi K."/>
            <person name="Semple C.A."/>
            <person name="Seno S."/>
            <person name="Sessa L."/>
            <person name="Sheng Y."/>
            <person name="Shibata Y."/>
            <person name="Shimada H."/>
            <person name="Shimada K."/>
            <person name="Silva D."/>
            <person name="Sinclair B."/>
            <person name="Sperling S."/>
            <person name="Stupka E."/>
            <person name="Sugiura K."/>
            <person name="Sultana R."/>
            <person name="Takenaka Y."/>
            <person name="Taki K."/>
            <person name="Tammoja K."/>
            <person name="Tan S.L."/>
            <person name="Tang S."/>
            <person name="Taylor M.S."/>
            <person name="Tegner J."/>
            <person name="Teichmann S.A."/>
            <person name="Ueda H.R."/>
            <person name="van Nimwegen E."/>
            <person name="Verardo R."/>
            <person name="Wei C.L."/>
            <person name="Yagi K."/>
            <person name="Yamanishi H."/>
            <person name="Zabarovsky E."/>
            <person name="Zhu S."/>
            <person name="Zimmer A."/>
            <person name="Hide W."/>
            <person name="Bult C."/>
            <person name="Grimmond S.M."/>
            <person name="Teasdale R.D."/>
            <person name="Liu E.T."/>
            <person name="Brusic V."/>
            <person name="Quackenbush J."/>
            <person name="Wahlestedt C."/>
            <person name="Mattick J.S."/>
            <person name="Hume D.A."/>
            <person name="Kai C."/>
            <person name="Sasaki D."/>
            <person name="Tomaru Y."/>
            <person name="Fukuda S."/>
            <person name="Kanamori-Katayama M."/>
            <person name="Suzuki M."/>
            <person name="Aoki J."/>
            <person name="Arakawa T."/>
            <person name="Iida J."/>
            <person name="Imamura K."/>
            <person name="Itoh M."/>
            <person name="Kato T."/>
            <person name="Kawaji H."/>
            <person name="Kawagashira N."/>
            <person name="Kawashima T."/>
            <person name="Kojima M."/>
            <person name="Kondo S."/>
            <person name="Konno H."/>
            <person name="Nakano K."/>
            <person name="Ninomiya N."/>
            <person name="Nishio T."/>
            <person name="Okada M."/>
            <person name="Plessy C."/>
            <person name="Shibata K."/>
            <person name="Shiraki T."/>
            <person name="Suzuki S."/>
            <person name="Tagami M."/>
            <person name="Waki K."/>
            <person name="Watahiki A."/>
            <person name="Okamura-Oho Y."/>
            <person name="Suzuki H."/>
            <person name="Kawai J."/>
            <person name="Hayashizaki Y."/>
        </authorList>
    </citation>
    <scope>NUCLEOTIDE SEQUENCE [LARGE SCALE MRNA] (ISOFORM 4)</scope>
    <source>
        <strain>C57BL/6J</strain>
        <tissue>Tongue</tissue>
    </source>
</reference>
<reference key="3">
    <citation type="journal article" date="2004" name="Genome Res.">
        <title>The status, quality, and expansion of the NIH full-length cDNA project: the Mammalian Gene Collection (MGC).</title>
        <authorList>
            <consortium name="The MGC Project Team"/>
        </authorList>
    </citation>
    <scope>NUCLEOTIDE SEQUENCE [LARGE SCALE MRNA] (ISOFORMS 3 AND 5)</scope>
    <source>
        <tissue>Eye</tissue>
    </source>
</reference>
<reference key="4">
    <citation type="journal article" date="1996" name="Brain Res. Mol. Brain Res.">
        <title>The expression of MEF2 genes is implicated in CNS neuronal differentiation.</title>
        <authorList>
            <person name="Lin X."/>
            <person name="Shah S."/>
            <person name="Bulleit R.F."/>
        </authorList>
    </citation>
    <scope>TISSUE SPECIFICITY</scope>
</reference>
<reference key="5">
    <citation type="journal article" date="1996" name="J. Biol. Chem.">
        <title>Phosphorylation of the MADS-Box transcription factor MEF2C enhances its DNA binding activity.</title>
        <authorList>
            <person name="Molkentin J.D."/>
            <person name="Li L."/>
            <person name="Olson E.N."/>
        </authorList>
    </citation>
    <scope>PHOSPHORYLATION AT SER-59</scope>
    <scope>MUTAGENESIS OF SER-59</scope>
</reference>
<reference key="6">
    <citation type="journal article" date="1997" name="Science">
        <title>Control of mouse cardiac morphogenesis and myogenesis by transcription factor MEF2C.</title>
        <authorList>
            <person name="Lin Q."/>
            <person name="Schwarz J."/>
            <person name="Bucana C."/>
            <person name="Olson E.N."/>
        </authorList>
    </citation>
    <scope>FUNCTION</scope>
</reference>
<reference key="7">
    <citation type="journal article" date="1998" name="Development">
        <title>Requirement of the MADS-box transcription factor MEF2C for vascular development.</title>
        <authorList>
            <person name="Lin Q."/>
            <person name="Lu J."/>
            <person name="Yanagisawa H."/>
            <person name="Webb R."/>
            <person name="Lyons G.E."/>
            <person name="Richardson J.A."/>
            <person name="Olson E.N."/>
        </authorList>
    </citation>
    <scope>FUNCTION</scope>
    <scope>DEVELOPMENTAL STAGE</scope>
</reference>
<reference key="8">
    <citation type="journal article" date="2001" name="Biochem. Biophys. Res. Commun.">
        <title>SOX18 directly interacts with MEF2C in endothelial cells.</title>
        <authorList>
            <person name="Hosking B.M."/>
            <person name="Wang S.C."/>
            <person name="Chen S.L."/>
            <person name="Penning S."/>
            <person name="Koopman P."/>
            <person name="Muscat G.E."/>
        </authorList>
    </citation>
    <scope>FUNCTION</scope>
    <scope>INTERACTION WITH SOX18</scope>
    <scope>SUBCELLULAR LOCATION</scope>
</reference>
<reference key="9">
    <citation type="journal article" date="2001" name="J. Biol. Chem.">
        <title>A dynamic role for HDAC7 in MEF2-mediated muscle differentiation.</title>
        <authorList>
            <person name="Dressel U."/>
            <person name="Bailey P.J."/>
            <person name="Wang S.-C.M."/>
            <person name="Downes M."/>
            <person name="Evans R.M."/>
            <person name="Muscat G.E.O."/>
        </authorList>
    </citation>
    <scope>INTERACTION WITH HDAC7</scope>
</reference>
<reference key="10">
    <citation type="journal article" date="2002" name="J. Biol. Chem.">
        <title>The coactivator-associated arginine methyltransferase is necessary for muscle differentiation: CARM1 coactivates myocyte enhancer factor-2.</title>
        <authorList>
            <person name="Chen S.L."/>
            <person name="Loffler K.A."/>
            <person name="Chen D."/>
            <person name="Stallcup M.R."/>
            <person name="Muscat G.E."/>
        </authorList>
    </citation>
    <scope>INTERACTION WITH CARM1</scope>
</reference>
<reference key="11">
    <citation type="journal article" date="2004" name="Mol. Cell. Biol.">
        <title>Phosphorylation and alternative pre-mRNA splicing converge to regulate myocyte enhancer factor 2C activity.</title>
        <authorList>
            <person name="Zhu B."/>
            <person name="Gulick T."/>
        </authorList>
    </citation>
    <scope>TISSUE SPECIFICITY OF ISOFORMS</scope>
</reference>
<reference key="12">
    <citation type="journal article" date="2005" name="J. Biol. Chem.">
        <title>Alternative pre-mRNA splicing governs expression of a conserved acidic transactivation domain in myocyte enhancer factor 2 factors of striated muscle and brain.</title>
        <authorList>
            <person name="Zhu B."/>
            <person name="Ramachandran B."/>
            <person name="Gulick T."/>
        </authorList>
    </citation>
    <scope>TISSUE SPECIFICITY OF ISOFORMS</scope>
</reference>
<reference key="13">
    <citation type="journal article" date="2006" name="Mol. Cell">
        <title>Coactivation of MEF2 by the SAP domain proteins myocardin and MASTR.</title>
        <authorList>
            <person name="Creemers E.E."/>
            <person name="Sutherland L.B."/>
            <person name="Oh J."/>
            <person name="Barbosa A.C."/>
            <person name="Olson E.N."/>
        </authorList>
    </citation>
    <scope>INTERACTION WITH MYOCD</scope>
</reference>
<reference key="14">
    <citation type="journal article" date="2008" name="Nat. Immunol.">
        <title>Transcription factor Mef2c is required for B cell proliferation and survival after antigen receptor stimulation.</title>
        <authorList>
            <person name="Wilker P.R."/>
            <person name="Kohyama M."/>
            <person name="Sandau M.M."/>
            <person name="Albring J.C."/>
            <person name="Nakagawa O."/>
            <person name="Schwarz J.J."/>
            <person name="Murphy K.M."/>
        </authorList>
    </citation>
    <scope>FUNCTION</scope>
    <scope>TISSUE SPECIFICITY</scope>
</reference>
<reference key="15">
    <citation type="journal article" date="2008" name="Nucleic Acids Res.">
        <title>Differentiation-dependent lysine 4 acetylation enhances MEF2C binding to DNA in skeletal muscle cells.</title>
        <authorList>
            <person name="Angelelli C."/>
            <person name="Magli A."/>
            <person name="Ferrari D."/>
            <person name="Ganassi M."/>
            <person name="Matafora V."/>
            <person name="Parise F."/>
            <person name="Razzini G."/>
            <person name="Bachi A."/>
            <person name="Ferrari S."/>
            <person name="Molinari S."/>
        </authorList>
    </citation>
    <scope>ACETYLATION AT LYS-4</scope>
    <scope>DNA-BINDING</scope>
    <scope>IDENTIFICATION BY MASS SPECTROMETRY</scope>
    <scope>FUNCTION</scope>
    <scope>MUTAGENESIS OF ARG-3 AND LYS-4</scope>
</reference>
<reference key="16">
    <citation type="journal article" date="2008" name="Proc. Natl. Acad. Sci. U.S.A.">
        <title>MEF2C, a transcription factor that facilitates learning and memory by negative regulation of synapse numbers and function.</title>
        <authorList>
            <person name="Barbosa A.C."/>
            <person name="Kim M.S."/>
            <person name="Ertunc M."/>
            <person name="Adachi M."/>
            <person name="Nelson E.D."/>
            <person name="McAnally J."/>
            <person name="Richardson J.A."/>
            <person name="Kavalali E.T."/>
            <person name="Monteggia L.M."/>
            <person name="Bassel-Duby R."/>
            <person name="Olson E.N."/>
        </authorList>
    </citation>
    <scope>FUNCTION</scope>
    <scope>DISRUPTION PHENOTYPE</scope>
    <scope>TISSUE SPECIFICITY</scope>
</reference>
<reference key="17">
    <citation type="journal article" date="2008" name="Proc. Natl. Acad. Sci. U.S.A.">
        <title>Transcription factor MEF2C influences neural stem/progenitor cell differentiation and maturation in vivo.</title>
        <authorList>
            <person name="Li H."/>
            <person name="Radford J.C."/>
            <person name="Ragusa M.J."/>
            <person name="Shea K.L."/>
            <person name="McKercher S.R."/>
            <person name="Zaremba J.D."/>
            <person name="Soussou W."/>
            <person name="Nie Z."/>
            <person name="Kang Y.J."/>
            <person name="Nakanishi N."/>
            <person name="Okamoto S."/>
            <person name="Roberts A.J."/>
            <person name="Schwarz J.J."/>
            <person name="Lipton S.A."/>
        </authorList>
    </citation>
    <scope>FUNCTION</scope>
    <scope>DISRUPTION PHENOTYPE</scope>
</reference>
<reference key="18">
    <citation type="journal article" date="2009" name="Blood">
        <title>Mef2C is a lineage-restricted target of Scl/Tal1 and regulates megakaryopoiesis and B-cell homeostasis.</title>
        <authorList>
            <person name="Gekas C."/>
            <person name="Rhodes K.E."/>
            <person name="Gereige L.M."/>
            <person name="Helgadottir H."/>
            <person name="Ferrari R."/>
            <person name="Kurdistani S.K."/>
            <person name="Montecino-Rodriguez E."/>
            <person name="Bassel-Duby R."/>
            <person name="Olson E."/>
            <person name="Krivtsov A.V."/>
            <person name="Armstrong S."/>
            <person name="Orkin S.H."/>
            <person name="Pellegrini M."/>
            <person name="Mikkola H.K."/>
        </authorList>
    </citation>
    <scope>FUNCTION</scope>
    <scope>DISRUPTION PHENOTYPE</scope>
</reference>
<reference key="19">
    <citation type="journal article" date="2009" name="PLoS ONE">
        <title>Sumoylation regulates nuclear localization of lipin-1alpha in neuronal cells.</title>
        <authorList>
            <person name="Liu G.H."/>
            <person name="Gerace L."/>
        </authorList>
    </citation>
    <scope>INTERACTION WITH LIPN1</scope>
</reference>
<reference key="20">
    <citation type="journal article" date="2010" name="Cell">
        <title>A tissue-specific atlas of mouse protein phosphorylation and expression.</title>
        <authorList>
            <person name="Huttlin E.L."/>
            <person name="Jedrychowski M.P."/>
            <person name="Elias J.E."/>
            <person name="Goswami T."/>
            <person name="Rad R."/>
            <person name="Beausoleil S.A."/>
            <person name="Villen J."/>
            <person name="Haas W."/>
            <person name="Sowa M.E."/>
            <person name="Gygi S.P."/>
        </authorList>
    </citation>
    <scope>PHOSPHORYLATION [LARGE SCALE ANALYSIS] AT SER-98; SER-106; SER-110; SER-222 AND SER-240</scope>
    <scope>PHOSPHORYLATION [LARGE SCALE ANALYSIS] AT THR-108 (ISOFORMS 4 AND 5)</scope>
    <scope>IDENTIFICATION BY MASS SPECTROMETRY [LARGE SCALE ANALYSIS]</scope>
    <source>
        <tissue>Brain</tissue>
        <tissue>Brown adipose tissue</tissue>
        <tissue>Heart</tissue>
        <tissue>Kidney</tissue>
        <tissue>Lung</tissue>
        <tissue>Spleen</tissue>
    </source>
</reference>
<reference key="21">
    <citation type="journal article" date="2010" name="J. Biol. Chem.">
        <title>The Rho guanine nucleotide exchange factor AKAP13 (BRX) is essential for cardiac development in mice.</title>
        <authorList>
            <person name="Mayers C.M."/>
            <person name="Wadell J."/>
            <person name="McLean K."/>
            <person name="Venere M."/>
            <person name="Malik M."/>
            <person name="Shibata T."/>
            <person name="Driggers P.H."/>
            <person name="Kino T."/>
            <person name="Guo X.C."/>
            <person name="Koide H."/>
            <person name="Gorivodsky M."/>
            <person name="Grinberg A."/>
            <person name="Mukhopadhyay M."/>
            <person name="Abu-Asab M."/>
            <person name="Westphal H."/>
            <person name="Segars J.H."/>
        </authorList>
    </citation>
    <scope>INTERACTION WITH AKAP13</scope>
</reference>
<reference key="22">
    <citation type="journal article" date="2012" name="J. Cell Sci.">
        <title>Foxk1 promotes cell proliferation and represses myogenic differentiation by regulating Foxo4 and Mef2.</title>
        <authorList>
            <person name="Shi X."/>
            <person name="Wallis A.M."/>
            <person name="Gerard R.D."/>
            <person name="Voelker K.A."/>
            <person name="Grange R.W."/>
            <person name="DePinho R.A."/>
            <person name="Garry M.G."/>
            <person name="Garry D.J."/>
        </authorList>
    </citation>
    <scope>INTERACTION WITH FOXK1</scope>
</reference>
<reference key="23">
    <citation type="journal article" date="2018" name="Science">
        <title>E-C coupling structural protein junctophilin-2 encodes a stress-adaptive transcription regulator.</title>
        <authorList>
            <person name="Guo A."/>
            <person name="Wang Y."/>
            <person name="Chen B."/>
            <person name="Wang Y."/>
            <person name="Yuan J."/>
            <person name="Zhang L."/>
            <person name="Hall D."/>
            <person name="Wu J."/>
            <person name="Shi Y."/>
            <person name="Zhu Q."/>
            <person name="Chen C."/>
            <person name="Thiel W.H."/>
            <person name="Zhan X."/>
            <person name="Weiss R.M."/>
            <person name="Zhan F."/>
            <person name="Musselman C.A."/>
            <person name="Pufall M."/>
            <person name="Zhu W."/>
            <person name="Au K.F."/>
            <person name="Hong J."/>
            <person name="Anderson M.E."/>
            <person name="Grueter C.E."/>
            <person name="Song L.S."/>
        </authorList>
    </citation>
    <scope>INTERACTION WITH JPH2</scope>
</reference>
<reference key="24">
    <citation type="journal article" date="2021" name="Nat. Cell Biol.">
        <title>The histone reader PHF7 cooperates with the SWI/SNF complex at cardiac super enhancers to promote direct reprogramming.</title>
        <authorList>
            <person name="Garry G.A."/>
            <person name="Bezprozvannaya S."/>
            <person name="Chen K."/>
            <person name="Zhou H."/>
            <person name="Hashimoto H."/>
            <person name="Morales M.G."/>
            <person name="Liu N."/>
            <person name="Bassel-Duby R."/>
            <person name="Olson E.N."/>
        </authorList>
    </citation>
    <scope>FUNCTION</scope>
    <scope>INTERACTION WITH PHF7</scope>
</reference>
<feature type="chain" id="PRO_0000199434" description="Myocyte-specific enhancer factor 2C">
    <location>
        <begin position="1"/>
        <end position="474"/>
    </location>
</feature>
<feature type="domain" description="MADS-box" evidence="5">
    <location>
        <begin position="3"/>
        <end position="57"/>
    </location>
</feature>
<feature type="DNA-binding region" description="Mef2-type" evidence="4">
    <location>
        <begin position="58"/>
        <end position="86"/>
    </location>
</feature>
<feature type="region of interest" description="Disordered" evidence="6">
    <location>
        <begin position="91"/>
        <end position="118"/>
    </location>
</feature>
<feature type="region of interest" description="Beta domain" evidence="1">
    <location>
        <begin position="271"/>
        <end position="278"/>
    </location>
</feature>
<feature type="region of interest" description="Transcription repressor" evidence="1">
    <location>
        <begin position="368"/>
        <end position="399"/>
    </location>
</feature>
<feature type="region of interest" description="Disordered" evidence="6">
    <location>
        <begin position="375"/>
        <end position="474"/>
    </location>
</feature>
<feature type="compositionally biased region" description="Polar residues" evidence="6">
    <location>
        <begin position="375"/>
        <end position="390"/>
    </location>
</feature>
<feature type="compositionally biased region" description="Low complexity" evidence="6">
    <location>
        <begin position="420"/>
        <end position="433"/>
    </location>
</feature>
<feature type="compositionally biased region" description="Basic and acidic residues" evidence="6">
    <location>
        <begin position="434"/>
        <end position="444"/>
    </location>
</feature>
<feature type="site" description="Cleavage" evidence="31">
    <location>
        <begin position="433"/>
        <end position="434"/>
    </location>
</feature>
<feature type="modified residue" description="N6-acetyllysine" evidence="13">
    <location>
        <position position="4"/>
    </location>
</feature>
<feature type="modified residue" description="Phosphoserine; by CK2" evidence="24">
    <location>
        <position position="59"/>
    </location>
</feature>
<feature type="modified residue" description="Phosphoserine" evidence="33">
    <location>
        <position position="98"/>
    </location>
</feature>
<feature type="modified residue" description="Phosphoserine" evidence="33">
    <location>
        <position position="106"/>
    </location>
</feature>
<feature type="modified residue" description="Phosphoserine" evidence="33">
    <location>
        <position position="110"/>
    </location>
</feature>
<feature type="modified residue" description="N6-acetyllysine" evidence="3">
    <location>
        <position position="116"/>
    </location>
</feature>
<feature type="modified residue" description="N6-acetyllysine" evidence="3">
    <location>
        <position position="119"/>
    </location>
</feature>
<feature type="modified residue" description="Phosphoserine" evidence="33">
    <location>
        <position position="222"/>
    </location>
</feature>
<feature type="modified residue" description="Phosphoserine" evidence="3">
    <location>
        <position position="228"/>
    </location>
</feature>
<feature type="modified residue" description="N6-acetyllysine" evidence="3">
    <location>
        <position position="234"/>
    </location>
</feature>
<feature type="modified residue" description="N6-acetyllysine" evidence="3">
    <location>
        <position position="239"/>
    </location>
</feature>
<feature type="modified residue" description="Phosphoserine" evidence="33">
    <location>
        <position position="240"/>
    </location>
</feature>
<feature type="modified residue" description="N6-acetyllysine" evidence="3">
    <location>
        <position position="252"/>
    </location>
</feature>
<feature type="modified residue" description="N6-acetyllysine" evidence="3">
    <location>
        <position position="264"/>
    </location>
</feature>
<feature type="modified residue" description="Phosphothreonine; by MAPK14" evidence="3">
    <location>
        <position position="293"/>
    </location>
</feature>
<feature type="modified residue" description="Phosphothreonine; by MAPK14" evidence="3">
    <location>
        <position position="300"/>
    </location>
</feature>
<feature type="modified residue" description="Phosphoserine; by CDK5" evidence="3">
    <location>
        <position position="396"/>
    </location>
</feature>
<feature type="modified residue" description="Phosphoserine; by MAPK7" evidence="3">
    <location>
        <position position="420"/>
    </location>
</feature>
<feature type="modified residue" description="Phosphoserine" evidence="3">
    <location>
        <position position="446"/>
    </location>
</feature>
<feature type="cross-link" description="Glycyl lysine isopeptide (Lys-Gly) (interchain with G-Cter in SUMO)" evidence="1">
    <location>
        <position position="391"/>
    </location>
</feature>
<feature type="splice variant" id="VSP_012501" description="In isoform 4 and isoform 5." evidence="28 29">
    <original>TLRKKGLNGCD</original>
    <variation>ALNKKENKGSE</variation>
    <location>
        <begin position="87"/>
        <end position="97"/>
    </location>
</feature>
<feature type="splice variant" id="VSP_012502" description="In isoform 4 and isoform 5." evidence="28 29">
    <original>ADDSVGHSPESEDKYR</original>
    <variation>SSYALTPRTEEKYK</variation>
    <location>
        <begin position="103"/>
        <end position="118"/>
    </location>
</feature>
<feature type="splice variant" id="VSP_012503" description="In isoform 4 and isoform 5." evidence="28 29">
    <original>DIDLMISRQRLC</original>
    <variation>EFDNMIKSHKIP</variation>
    <location>
        <begin position="123"/>
        <end position="134"/>
    </location>
</feature>
<feature type="splice variant" id="VSP_012504" description="In isoform 2 and isoform 4." evidence="29 30">
    <location>
        <begin position="271"/>
        <end position="278"/>
    </location>
</feature>
<feature type="splice variant" id="VSP_012505" description="In isoform 3 and isoform 4." evidence="28 29">
    <location>
        <begin position="368"/>
        <end position="399"/>
    </location>
</feature>
<feature type="mutagenesis site" description="Increased mobility in differentiating cells. Greatly reduced DNA binding." evidence="13">
    <original>R</original>
    <variation>T</variation>
    <location>
        <position position="3"/>
    </location>
</feature>
<feature type="mutagenesis site" description="7-fold increase in DNA binding." evidence="13">
    <original>K</original>
    <variation>Q</variation>
    <location>
        <position position="4"/>
    </location>
</feature>
<feature type="mutagenesis site" description="Reduced acetylation by 30%. Some loss of DNA binding and transactivation activity." evidence="13">
    <original>K</original>
    <variation>R</variation>
    <location>
        <position position="4"/>
    </location>
</feature>
<feature type="mutagenesis site" description="Reduced DNA binding activity.">
    <original>ST</original>
    <variation>CR</variation>
    <location>
        <begin position="59"/>
        <end position="60"/>
    </location>
</feature>
<feature type="mutagenesis site" description="Enhanced DNA binding activity.">
    <original>ST</original>
    <variation>DD</variation>
    <location>
        <begin position="59"/>
        <end position="60"/>
    </location>
</feature>
<feature type="mutagenesis site" description="Reduced DNA binding activity." evidence="24">
    <original>S</original>
    <variation>A</variation>
    <location>
        <position position="59"/>
    </location>
</feature>
<feature type="mutagenesis site" description="Enhanced DNA binding activity." evidence="24">
    <original>S</original>
    <variation>D</variation>
    <location>
        <position position="59"/>
    </location>
</feature>
<feature type="sequence conflict" description="In Ref. 3; AAH37731." evidence="31" ref="3">
    <original>F</original>
    <variation>L</variation>
    <location>
        <position position="141"/>
    </location>
</feature>
<feature type="sequence conflict" description="In Ref. 1." evidence="31" ref="1">
    <original>S</original>
    <variation>P</variation>
    <location>
        <position position="211"/>
    </location>
</feature>
<feature type="sequence conflict" description="In Ref. 1." evidence="31" ref="1">
    <original>C</original>
    <variation>S</variation>
    <location>
        <position position="428"/>
    </location>
</feature>
<feature type="helix" evidence="34">
    <location>
        <begin position="22"/>
        <end position="38"/>
    </location>
</feature>
<feature type="strand" evidence="34">
    <location>
        <begin position="42"/>
        <end position="48"/>
    </location>
</feature>
<feature type="strand" evidence="34">
    <location>
        <begin position="54"/>
        <end position="60"/>
    </location>
</feature>
<feature type="helix" evidence="34">
    <location>
        <begin position="62"/>
        <end position="70"/>
    </location>
</feature>
<feature type="strand" evidence="34">
    <location>
        <begin position="77"/>
        <end position="79"/>
    </location>
</feature>
<feature type="helix" evidence="34">
    <location>
        <begin position="81"/>
        <end position="88"/>
    </location>
</feature>
<feature type="modified residue" description="Phosphothreonine" evidence="33">
    <location sequence="Q8CFN5-4">
        <position position="108"/>
    </location>
</feature>
<feature type="modified residue" description="Phosphothreonine" evidence="33">
    <location sequence="Q8CFN5-5">
        <position position="108"/>
    </location>
</feature>
<organism>
    <name type="scientific">Mus musculus</name>
    <name type="common">Mouse</name>
    <dbReference type="NCBI Taxonomy" id="10090"/>
    <lineage>
        <taxon>Eukaryota</taxon>
        <taxon>Metazoa</taxon>
        <taxon>Chordata</taxon>
        <taxon>Craniata</taxon>
        <taxon>Vertebrata</taxon>
        <taxon>Euteleostomi</taxon>
        <taxon>Mammalia</taxon>
        <taxon>Eutheria</taxon>
        <taxon>Euarchontoglires</taxon>
        <taxon>Glires</taxon>
        <taxon>Rodentia</taxon>
        <taxon>Myomorpha</taxon>
        <taxon>Muroidea</taxon>
        <taxon>Muridae</taxon>
        <taxon>Murinae</taxon>
        <taxon>Mus</taxon>
        <taxon>Mus</taxon>
    </lineage>
</organism>